<organism>
    <name type="scientific">Nitratidesulfovibrio vulgaris (strain DSM 19637 / Miyazaki F)</name>
    <name type="common">Desulfovibrio vulgaris</name>
    <dbReference type="NCBI Taxonomy" id="883"/>
    <lineage>
        <taxon>Bacteria</taxon>
        <taxon>Pseudomonadati</taxon>
        <taxon>Thermodesulfobacteriota</taxon>
        <taxon>Desulfovibrionia</taxon>
        <taxon>Desulfovibrionales</taxon>
        <taxon>Desulfovibrionaceae</taxon>
        <taxon>Nitratidesulfovibrio</taxon>
    </lineage>
</organism>
<protein>
    <recommendedName>
        <fullName evidence="1">Small ribosomal subunit protein bS6</fullName>
    </recommendedName>
    <alternativeName>
        <fullName evidence="2">30S ribosomal protein S6</fullName>
    </alternativeName>
</protein>
<sequence>MRKFETLLLLSPELAADAREALLGTLTGVVEREQGKMVAADHWGMRDLAYPVQKHMRGYYVRLEYLAPGEAVAEVERNIRISDGIFKFVTVKLADAVEEVA</sequence>
<accession>B8DRL2</accession>
<reference key="1">
    <citation type="submission" date="2008-10" db="EMBL/GenBank/DDBJ databases">
        <title>Complete sequence of Desulfovibrio vulgaris str. 'Miyazaki F'.</title>
        <authorList>
            <person name="Lucas S."/>
            <person name="Copeland A."/>
            <person name="Lapidus A."/>
            <person name="Glavina del Rio T."/>
            <person name="Dalin E."/>
            <person name="Tice H."/>
            <person name="Bruce D."/>
            <person name="Goodwin L."/>
            <person name="Pitluck S."/>
            <person name="Sims D."/>
            <person name="Brettin T."/>
            <person name="Detter J.C."/>
            <person name="Han C."/>
            <person name="Larimer F."/>
            <person name="Land M."/>
            <person name="Hauser L."/>
            <person name="Kyrpides N."/>
            <person name="Mikhailova N."/>
            <person name="Hazen T.C."/>
            <person name="Richardson P."/>
        </authorList>
    </citation>
    <scope>NUCLEOTIDE SEQUENCE [LARGE SCALE GENOMIC DNA]</scope>
    <source>
        <strain>DSM 19637 / Miyazaki F</strain>
    </source>
</reference>
<evidence type="ECO:0000255" key="1">
    <source>
        <dbReference type="HAMAP-Rule" id="MF_00360"/>
    </source>
</evidence>
<evidence type="ECO:0000305" key="2"/>
<proteinExistence type="inferred from homology"/>
<gene>
    <name evidence="1" type="primary">rpsF</name>
    <name type="ordered locus">DvMF_1350</name>
</gene>
<dbReference type="EMBL" id="CP001197">
    <property type="protein sequence ID" value="ACL08299.1"/>
    <property type="molecule type" value="Genomic_DNA"/>
</dbReference>
<dbReference type="SMR" id="B8DRL2"/>
<dbReference type="STRING" id="883.DvMF_1350"/>
<dbReference type="KEGG" id="dvm:DvMF_1350"/>
<dbReference type="eggNOG" id="COG0360">
    <property type="taxonomic scope" value="Bacteria"/>
</dbReference>
<dbReference type="HOGENOM" id="CLU_113441_5_1_7"/>
<dbReference type="OrthoDB" id="9812702at2"/>
<dbReference type="GO" id="GO:0005737">
    <property type="term" value="C:cytoplasm"/>
    <property type="evidence" value="ECO:0007669"/>
    <property type="project" value="UniProtKB-ARBA"/>
</dbReference>
<dbReference type="GO" id="GO:1990904">
    <property type="term" value="C:ribonucleoprotein complex"/>
    <property type="evidence" value="ECO:0007669"/>
    <property type="project" value="UniProtKB-KW"/>
</dbReference>
<dbReference type="GO" id="GO:0005840">
    <property type="term" value="C:ribosome"/>
    <property type="evidence" value="ECO:0007669"/>
    <property type="project" value="UniProtKB-KW"/>
</dbReference>
<dbReference type="GO" id="GO:0070181">
    <property type="term" value="F:small ribosomal subunit rRNA binding"/>
    <property type="evidence" value="ECO:0007669"/>
    <property type="project" value="TreeGrafter"/>
</dbReference>
<dbReference type="GO" id="GO:0003735">
    <property type="term" value="F:structural constituent of ribosome"/>
    <property type="evidence" value="ECO:0007669"/>
    <property type="project" value="InterPro"/>
</dbReference>
<dbReference type="GO" id="GO:0006412">
    <property type="term" value="P:translation"/>
    <property type="evidence" value="ECO:0007669"/>
    <property type="project" value="UniProtKB-UniRule"/>
</dbReference>
<dbReference type="CDD" id="cd00473">
    <property type="entry name" value="bS6"/>
    <property type="match status" value="1"/>
</dbReference>
<dbReference type="Gene3D" id="3.30.70.60">
    <property type="match status" value="1"/>
</dbReference>
<dbReference type="HAMAP" id="MF_00360">
    <property type="entry name" value="Ribosomal_bS6"/>
    <property type="match status" value="1"/>
</dbReference>
<dbReference type="InterPro" id="IPR000529">
    <property type="entry name" value="Ribosomal_bS6"/>
</dbReference>
<dbReference type="InterPro" id="IPR035980">
    <property type="entry name" value="Ribosomal_bS6_sf"/>
</dbReference>
<dbReference type="InterPro" id="IPR020814">
    <property type="entry name" value="Ribosomal_S6_plastid/chlpt"/>
</dbReference>
<dbReference type="InterPro" id="IPR014717">
    <property type="entry name" value="Transl_elong_EF1B/ribsomal_bS6"/>
</dbReference>
<dbReference type="NCBIfam" id="TIGR00166">
    <property type="entry name" value="S6"/>
    <property type="match status" value="1"/>
</dbReference>
<dbReference type="PANTHER" id="PTHR21011">
    <property type="entry name" value="MITOCHONDRIAL 28S RIBOSOMAL PROTEIN S6"/>
    <property type="match status" value="1"/>
</dbReference>
<dbReference type="PANTHER" id="PTHR21011:SF1">
    <property type="entry name" value="SMALL RIBOSOMAL SUBUNIT PROTEIN BS6M"/>
    <property type="match status" value="1"/>
</dbReference>
<dbReference type="Pfam" id="PF01250">
    <property type="entry name" value="Ribosomal_S6"/>
    <property type="match status" value="1"/>
</dbReference>
<dbReference type="SUPFAM" id="SSF54995">
    <property type="entry name" value="Ribosomal protein S6"/>
    <property type="match status" value="1"/>
</dbReference>
<comment type="function">
    <text evidence="1">Binds together with bS18 to 16S ribosomal RNA.</text>
</comment>
<comment type="similarity">
    <text evidence="1">Belongs to the bacterial ribosomal protein bS6 family.</text>
</comment>
<keyword id="KW-0687">Ribonucleoprotein</keyword>
<keyword id="KW-0689">Ribosomal protein</keyword>
<keyword id="KW-0694">RNA-binding</keyword>
<keyword id="KW-0699">rRNA-binding</keyword>
<name>RS6_NITV9</name>
<feature type="chain" id="PRO_1000120740" description="Small ribosomal subunit protein bS6">
    <location>
        <begin position="1"/>
        <end position="101"/>
    </location>
</feature>